<gene>
    <name evidence="1" type="primary">murB</name>
    <name type="ordered locus">LBUL_0577</name>
</gene>
<protein>
    <recommendedName>
        <fullName evidence="1">UDP-N-acetylenolpyruvoylglucosamine reductase</fullName>
        <ecNumber evidence="1">1.3.1.98</ecNumber>
    </recommendedName>
    <alternativeName>
        <fullName evidence="1">UDP-N-acetylmuramate dehydrogenase</fullName>
    </alternativeName>
</protein>
<organism>
    <name type="scientific">Lactobacillus delbrueckii subsp. bulgaricus (strain ATCC BAA-365 / Lb-18)</name>
    <dbReference type="NCBI Taxonomy" id="321956"/>
    <lineage>
        <taxon>Bacteria</taxon>
        <taxon>Bacillati</taxon>
        <taxon>Bacillota</taxon>
        <taxon>Bacilli</taxon>
        <taxon>Lactobacillales</taxon>
        <taxon>Lactobacillaceae</taxon>
        <taxon>Lactobacillus</taxon>
    </lineage>
</organism>
<feature type="chain" id="PRO_1000002889" description="UDP-N-acetylenolpyruvoylglucosamine reductase">
    <location>
        <begin position="1"/>
        <end position="297"/>
    </location>
</feature>
<feature type="domain" description="FAD-binding PCMH-type" evidence="1">
    <location>
        <begin position="26"/>
        <end position="191"/>
    </location>
</feature>
<feature type="active site" evidence="1">
    <location>
        <position position="170"/>
    </location>
</feature>
<feature type="active site" description="Proton donor" evidence="1">
    <location>
        <position position="220"/>
    </location>
</feature>
<feature type="active site" evidence="1">
    <location>
        <position position="290"/>
    </location>
</feature>
<dbReference type="EC" id="1.3.1.98" evidence="1"/>
<dbReference type="EMBL" id="CP000412">
    <property type="protein sequence ID" value="ABJ58209.1"/>
    <property type="molecule type" value="Genomic_DNA"/>
</dbReference>
<dbReference type="RefSeq" id="WP_003618978.1">
    <property type="nucleotide sequence ID" value="NC_008529.1"/>
</dbReference>
<dbReference type="SMR" id="Q04BG3"/>
<dbReference type="KEGG" id="lbu:LBUL_0577"/>
<dbReference type="HOGENOM" id="CLU_035304_1_1_9"/>
<dbReference type="BioCyc" id="LDEL321956:LBUL_RS02745-MONOMER"/>
<dbReference type="UniPathway" id="UPA00219"/>
<dbReference type="GO" id="GO:0005829">
    <property type="term" value="C:cytosol"/>
    <property type="evidence" value="ECO:0007669"/>
    <property type="project" value="TreeGrafter"/>
</dbReference>
<dbReference type="GO" id="GO:0071949">
    <property type="term" value="F:FAD binding"/>
    <property type="evidence" value="ECO:0007669"/>
    <property type="project" value="InterPro"/>
</dbReference>
<dbReference type="GO" id="GO:0008762">
    <property type="term" value="F:UDP-N-acetylmuramate dehydrogenase activity"/>
    <property type="evidence" value="ECO:0007669"/>
    <property type="project" value="UniProtKB-UniRule"/>
</dbReference>
<dbReference type="GO" id="GO:0051301">
    <property type="term" value="P:cell division"/>
    <property type="evidence" value="ECO:0007669"/>
    <property type="project" value="UniProtKB-KW"/>
</dbReference>
<dbReference type="GO" id="GO:0071555">
    <property type="term" value="P:cell wall organization"/>
    <property type="evidence" value="ECO:0007669"/>
    <property type="project" value="UniProtKB-KW"/>
</dbReference>
<dbReference type="GO" id="GO:0009252">
    <property type="term" value="P:peptidoglycan biosynthetic process"/>
    <property type="evidence" value="ECO:0007669"/>
    <property type="project" value="UniProtKB-UniRule"/>
</dbReference>
<dbReference type="GO" id="GO:0008360">
    <property type="term" value="P:regulation of cell shape"/>
    <property type="evidence" value="ECO:0007669"/>
    <property type="project" value="UniProtKB-KW"/>
</dbReference>
<dbReference type="Gene3D" id="3.30.465.10">
    <property type="match status" value="1"/>
</dbReference>
<dbReference type="Gene3D" id="3.90.78.10">
    <property type="entry name" value="UDP-N-acetylenolpyruvoylglucosamine reductase, C-terminal domain"/>
    <property type="match status" value="1"/>
</dbReference>
<dbReference type="Gene3D" id="3.30.43.10">
    <property type="entry name" value="Uridine Diphospho-n-acetylenolpyruvylglucosamine Reductase, domain 2"/>
    <property type="match status" value="1"/>
</dbReference>
<dbReference type="HAMAP" id="MF_00037">
    <property type="entry name" value="MurB"/>
    <property type="match status" value="1"/>
</dbReference>
<dbReference type="InterPro" id="IPR016166">
    <property type="entry name" value="FAD-bd_PCMH"/>
</dbReference>
<dbReference type="InterPro" id="IPR036318">
    <property type="entry name" value="FAD-bd_PCMH-like_sf"/>
</dbReference>
<dbReference type="InterPro" id="IPR016167">
    <property type="entry name" value="FAD-bd_PCMH_sub1"/>
</dbReference>
<dbReference type="InterPro" id="IPR016169">
    <property type="entry name" value="FAD-bd_PCMH_sub2"/>
</dbReference>
<dbReference type="InterPro" id="IPR003170">
    <property type="entry name" value="MurB"/>
</dbReference>
<dbReference type="InterPro" id="IPR011601">
    <property type="entry name" value="MurB_C"/>
</dbReference>
<dbReference type="InterPro" id="IPR036635">
    <property type="entry name" value="MurB_C_sf"/>
</dbReference>
<dbReference type="InterPro" id="IPR006094">
    <property type="entry name" value="Oxid_FAD_bind_N"/>
</dbReference>
<dbReference type="NCBIfam" id="TIGR00179">
    <property type="entry name" value="murB"/>
    <property type="match status" value="1"/>
</dbReference>
<dbReference type="NCBIfam" id="NF010480">
    <property type="entry name" value="PRK13905.1"/>
    <property type="match status" value="1"/>
</dbReference>
<dbReference type="PANTHER" id="PTHR21071">
    <property type="entry name" value="UDP-N-ACETYLENOLPYRUVOYLGLUCOSAMINE REDUCTASE"/>
    <property type="match status" value="1"/>
</dbReference>
<dbReference type="PANTHER" id="PTHR21071:SF4">
    <property type="entry name" value="UDP-N-ACETYLENOLPYRUVOYLGLUCOSAMINE REDUCTASE"/>
    <property type="match status" value="1"/>
</dbReference>
<dbReference type="Pfam" id="PF01565">
    <property type="entry name" value="FAD_binding_4"/>
    <property type="match status" value="1"/>
</dbReference>
<dbReference type="Pfam" id="PF02873">
    <property type="entry name" value="MurB_C"/>
    <property type="match status" value="1"/>
</dbReference>
<dbReference type="SUPFAM" id="SSF56176">
    <property type="entry name" value="FAD-binding/transporter-associated domain-like"/>
    <property type="match status" value="1"/>
</dbReference>
<dbReference type="SUPFAM" id="SSF56194">
    <property type="entry name" value="Uridine diphospho-N-Acetylenolpyruvylglucosamine reductase, MurB, C-terminal domain"/>
    <property type="match status" value="1"/>
</dbReference>
<dbReference type="PROSITE" id="PS51387">
    <property type="entry name" value="FAD_PCMH"/>
    <property type="match status" value="1"/>
</dbReference>
<sequence>MKLYDLKAQGLDLQENIPLSRYTFTQTGGPAEYLAFPKTLAELKELLAAAKEDQLPITVIGNASNLIIRDKGIKGLVIILTEMKEIKVEADKVHAQAGARIIDTSFAAGEAGLSGLEFAAGIPGSVGGAVFMNAGAYGGETKDCLESATVVTRDGEVKTYTNAELHFSYRHSLLQENDEIVIAATFALKAGDKATILDQMNYLNALRSYKQPLEYPSCGSVFKRPTGHFVGPMLIKAGLQGKQIGGAQVSTKHAGFIVNKGGATATDYLNLIHYIQKTIKEKDGIALQTEVRIIGEE</sequence>
<keyword id="KW-0131">Cell cycle</keyword>
<keyword id="KW-0132">Cell division</keyword>
<keyword id="KW-0133">Cell shape</keyword>
<keyword id="KW-0961">Cell wall biogenesis/degradation</keyword>
<keyword id="KW-0963">Cytoplasm</keyword>
<keyword id="KW-0274">FAD</keyword>
<keyword id="KW-0285">Flavoprotein</keyword>
<keyword id="KW-0521">NADP</keyword>
<keyword id="KW-0560">Oxidoreductase</keyword>
<keyword id="KW-0573">Peptidoglycan synthesis</keyword>
<proteinExistence type="inferred from homology"/>
<accession>Q04BG3</accession>
<name>MURB_LACDB</name>
<evidence type="ECO:0000255" key="1">
    <source>
        <dbReference type="HAMAP-Rule" id="MF_00037"/>
    </source>
</evidence>
<reference key="1">
    <citation type="journal article" date="2006" name="Proc. Natl. Acad. Sci. U.S.A.">
        <title>Comparative genomics of the lactic acid bacteria.</title>
        <authorList>
            <person name="Makarova K.S."/>
            <person name="Slesarev A."/>
            <person name="Wolf Y.I."/>
            <person name="Sorokin A."/>
            <person name="Mirkin B."/>
            <person name="Koonin E.V."/>
            <person name="Pavlov A."/>
            <person name="Pavlova N."/>
            <person name="Karamychev V."/>
            <person name="Polouchine N."/>
            <person name="Shakhova V."/>
            <person name="Grigoriev I."/>
            <person name="Lou Y."/>
            <person name="Rohksar D."/>
            <person name="Lucas S."/>
            <person name="Huang K."/>
            <person name="Goodstein D.M."/>
            <person name="Hawkins T."/>
            <person name="Plengvidhya V."/>
            <person name="Welker D."/>
            <person name="Hughes J."/>
            <person name="Goh Y."/>
            <person name="Benson A."/>
            <person name="Baldwin K."/>
            <person name="Lee J.-H."/>
            <person name="Diaz-Muniz I."/>
            <person name="Dosti B."/>
            <person name="Smeianov V."/>
            <person name="Wechter W."/>
            <person name="Barabote R."/>
            <person name="Lorca G."/>
            <person name="Altermann E."/>
            <person name="Barrangou R."/>
            <person name="Ganesan B."/>
            <person name="Xie Y."/>
            <person name="Rawsthorne H."/>
            <person name="Tamir D."/>
            <person name="Parker C."/>
            <person name="Breidt F."/>
            <person name="Broadbent J.R."/>
            <person name="Hutkins R."/>
            <person name="O'Sullivan D."/>
            <person name="Steele J."/>
            <person name="Unlu G."/>
            <person name="Saier M.H. Jr."/>
            <person name="Klaenhammer T."/>
            <person name="Richardson P."/>
            <person name="Kozyavkin S."/>
            <person name="Weimer B.C."/>
            <person name="Mills D.A."/>
        </authorList>
    </citation>
    <scope>NUCLEOTIDE SEQUENCE [LARGE SCALE GENOMIC DNA]</scope>
    <source>
        <strain>ATCC BAA-365 / Lb-18</strain>
    </source>
</reference>
<comment type="function">
    <text evidence="1">Cell wall formation.</text>
</comment>
<comment type="catalytic activity">
    <reaction evidence="1">
        <text>UDP-N-acetyl-alpha-D-muramate + NADP(+) = UDP-N-acetyl-3-O-(1-carboxyvinyl)-alpha-D-glucosamine + NADPH + H(+)</text>
        <dbReference type="Rhea" id="RHEA:12248"/>
        <dbReference type="ChEBI" id="CHEBI:15378"/>
        <dbReference type="ChEBI" id="CHEBI:57783"/>
        <dbReference type="ChEBI" id="CHEBI:58349"/>
        <dbReference type="ChEBI" id="CHEBI:68483"/>
        <dbReference type="ChEBI" id="CHEBI:70757"/>
        <dbReference type="EC" id="1.3.1.98"/>
    </reaction>
</comment>
<comment type="cofactor">
    <cofactor evidence="1">
        <name>FAD</name>
        <dbReference type="ChEBI" id="CHEBI:57692"/>
    </cofactor>
</comment>
<comment type="pathway">
    <text evidence="1">Cell wall biogenesis; peptidoglycan biosynthesis.</text>
</comment>
<comment type="subcellular location">
    <subcellularLocation>
        <location evidence="1">Cytoplasm</location>
    </subcellularLocation>
</comment>
<comment type="similarity">
    <text evidence="1">Belongs to the MurB family.</text>
</comment>